<gene>
    <name evidence="1" type="primary">pebA</name>
    <name type="ordered locus">Syncc9605_0423</name>
</gene>
<dbReference type="EC" id="1.3.7.2" evidence="1"/>
<dbReference type="EMBL" id="CP000110">
    <property type="protein sequence ID" value="ABB34199.1"/>
    <property type="molecule type" value="Genomic_DNA"/>
</dbReference>
<dbReference type="RefSeq" id="WP_011363436.1">
    <property type="nucleotide sequence ID" value="NC_007516.1"/>
</dbReference>
<dbReference type="SMR" id="Q3AMI3"/>
<dbReference type="STRING" id="110662.Syncc9605_0423"/>
<dbReference type="KEGG" id="syd:Syncc9605_0423"/>
<dbReference type="eggNOG" id="ENOG502Z8J9">
    <property type="taxonomic scope" value="Bacteria"/>
</dbReference>
<dbReference type="HOGENOM" id="CLU_086208_0_0_3"/>
<dbReference type="OrthoDB" id="527390at2"/>
<dbReference type="GO" id="GO:0050617">
    <property type="term" value="F:15,16-dihydrobiliverdin:ferredoxin oxidoreductase activity"/>
    <property type="evidence" value="ECO:0007669"/>
    <property type="project" value="UniProtKB-UniRule"/>
</dbReference>
<dbReference type="GO" id="GO:0050897">
    <property type="term" value="F:cobalt ion binding"/>
    <property type="evidence" value="ECO:0007669"/>
    <property type="project" value="InterPro"/>
</dbReference>
<dbReference type="GO" id="GO:0010024">
    <property type="term" value="P:phytochromobilin biosynthetic process"/>
    <property type="evidence" value="ECO:0007669"/>
    <property type="project" value="InterPro"/>
</dbReference>
<dbReference type="Gene3D" id="3.40.1500.20">
    <property type="match status" value="1"/>
</dbReference>
<dbReference type="HAMAP" id="MF_00792">
    <property type="entry name" value="PebA"/>
    <property type="match status" value="1"/>
</dbReference>
<dbReference type="InterPro" id="IPR023658">
    <property type="entry name" value="DiHydbiliverdin_OxRdtase"/>
</dbReference>
<dbReference type="InterPro" id="IPR009249">
    <property type="entry name" value="Ferredoxin-dep_bilin_Rdtase"/>
</dbReference>
<dbReference type="NCBIfam" id="NF009720">
    <property type="entry name" value="PRK13247.1"/>
    <property type="match status" value="1"/>
</dbReference>
<dbReference type="PANTHER" id="PTHR34557">
    <property type="entry name" value="PHYTOCHROMOBILIN:FERREDOXIN OXIDOREDUCTASE, CHLOROPLASTIC"/>
    <property type="match status" value="1"/>
</dbReference>
<dbReference type="PANTHER" id="PTHR34557:SF1">
    <property type="entry name" value="PHYTOCHROMOBILIN:FERREDOXIN OXIDOREDUCTASE, CHLOROPLASTIC"/>
    <property type="match status" value="1"/>
</dbReference>
<dbReference type="Pfam" id="PF05996">
    <property type="entry name" value="Fe_bilin_red"/>
    <property type="match status" value="1"/>
</dbReference>
<keyword id="KW-0560">Oxidoreductase</keyword>
<evidence type="ECO:0000255" key="1">
    <source>
        <dbReference type="HAMAP-Rule" id="MF_00792"/>
    </source>
</evidence>
<name>PEBA_SYNSC</name>
<proteinExistence type="inferred from homology"/>
<feature type="chain" id="PRO_1000046926" description="15,16-dihydrobiliverdin:ferredoxin oxidoreductase">
    <location>
        <begin position="1"/>
        <end position="235"/>
    </location>
</feature>
<sequence length="235" mass="26917">MFDPFLEELLSGIKARGAVPVEVPHGLEHNQSSKRSSTIKSWLWDVPGFRRWRVTRLDAGDSLQVLNSVAYPDYTYDHPLMGVDLLWFGAKQKLVAVLDFQPLVQDKDYLERYFDGLKSLNAQFPDLNGEETMRSFDPNQYFSSWLLFCRGGAEQATSSLPTAFSAFLKTYWDLHDKAVKIPSSINPIEVAQLQKNYDIYSAERDPAHGLFTSHFGSEWSDRFLHEFLFPASQPK</sequence>
<protein>
    <recommendedName>
        <fullName evidence="1">15,16-dihydrobiliverdin:ferredoxin oxidoreductase</fullName>
        <ecNumber evidence="1">1.3.7.2</ecNumber>
    </recommendedName>
</protein>
<reference key="1">
    <citation type="submission" date="2005-07" db="EMBL/GenBank/DDBJ databases">
        <title>Complete sequence of Synechococcus sp. CC9605.</title>
        <authorList>
            <consortium name="US DOE Joint Genome Institute"/>
            <person name="Copeland A."/>
            <person name="Lucas S."/>
            <person name="Lapidus A."/>
            <person name="Barry K."/>
            <person name="Detter J.C."/>
            <person name="Glavina T."/>
            <person name="Hammon N."/>
            <person name="Israni S."/>
            <person name="Pitluck S."/>
            <person name="Schmutz J."/>
            <person name="Martinez M."/>
            <person name="Larimer F."/>
            <person name="Land M."/>
            <person name="Kyrpides N."/>
            <person name="Ivanova N."/>
            <person name="Richardson P."/>
        </authorList>
    </citation>
    <scope>NUCLEOTIDE SEQUENCE [LARGE SCALE GENOMIC DNA]</scope>
    <source>
        <strain>CC9605</strain>
    </source>
</reference>
<comment type="function">
    <text evidence="1">Catalyzes the two-electron reduction of biliverdin IX-alpha at the C15 methine bridge.</text>
</comment>
<comment type="catalytic activity">
    <reaction evidence="1">
        <text>15,16-dihydrobiliverdin + oxidized 2[4Fe-4S]-[ferredoxin] = biliverdin IXalpha + reduced 2[4Fe-4S]-[ferredoxin] + 2 H(+)</text>
        <dbReference type="Rhea" id="RHEA:10168"/>
        <dbReference type="Rhea" id="RHEA-COMP:10002"/>
        <dbReference type="Rhea" id="RHEA-COMP:10004"/>
        <dbReference type="ChEBI" id="CHEBI:15378"/>
        <dbReference type="ChEBI" id="CHEBI:33722"/>
        <dbReference type="ChEBI" id="CHEBI:33723"/>
        <dbReference type="ChEBI" id="CHEBI:57899"/>
        <dbReference type="ChEBI" id="CHEBI:57991"/>
        <dbReference type="EC" id="1.3.7.2"/>
    </reaction>
</comment>
<comment type="similarity">
    <text evidence="1">Belongs to the HY2 family.</text>
</comment>
<accession>Q3AMI3</accession>
<organism>
    <name type="scientific">Synechococcus sp. (strain CC9605)</name>
    <dbReference type="NCBI Taxonomy" id="110662"/>
    <lineage>
        <taxon>Bacteria</taxon>
        <taxon>Bacillati</taxon>
        <taxon>Cyanobacteriota</taxon>
        <taxon>Cyanophyceae</taxon>
        <taxon>Synechococcales</taxon>
        <taxon>Synechococcaceae</taxon>
        <taxon>Synechococcus</taxon>
    </lineage>
</organism>